<gene>
    <name evidence="1" type="primary">rbn</name>
    <name type="synonym">elaC</name>
    <name type="synonym">rnz</name>
    <name type="ordered locus">SF2347</name>
    <name type="ordered locus">S2481</name>
</gene>
<dbReference type="EC" id="3.1.-.-" evidence="1"/>
<dbReference type="EMBL" id="AE005674">
    <property type="protein sequence ID" value="AAN43861.1"/>
    <property type="status" value="ALT_INIT"/>
    <property type="molecule type" value="Genomic_DNA"/>
</dbReference>
<dbReference type="EMBL" id="AE014073">
    <property type="protein sequence ID" value="AAP17680.1"/>
    <property type="status" value="ALT_INIT"/>
    <property type="molecule type" value="Genomic_DNA"/>
</dbReference>
<dbReference type="RefSeq" id="NP_708154.3">
    <property type="nucleotide sequence ID" value="NC_004337.2"/>
</dbReference>
<dbReference type="RefSeq" id="WP_001300687.1">
    <property type="nucleotide sequence ID" value="NZ_WPGW01000032.1"/>
</dbReference>
<dbReference type="SMR" id="P0A8V1"/>
<dbReference type="STRING" id="198214.SF2347"/>
<dbReference type="PaxDb" id="198214-SF2347"/>
<dbReference type="GeneID" id="1025507"/>
<dbReference type="KEGG" id="sfl:SF2347"/>
<dbReference type="KEGG" id="sfx:S2481"/>
<dbReference type="PATRIC" id="fig|198214.7.peg.2811"/>
<dbReference type="HOGENOM" id="CLU_031317_2_0_6"/>
<dbReference type="Proteomes" id="UP000001006">
    <property type="component" value="Chromosome"/>
</dbReference>
<dbReference type="Proteomes" id="UP000002673">
    <property type="component" value="Chromosome"/>
</dbReference>
<dbReference type="GO" id="GO:0042781">
    <property type="term" value="F:3'-tRNA processing endoribonuclease activity"/>
    <property type="evidence" value="ECO:0007669"/>
    <property type="project" value="TreeGrafter"/>
</dbReference>
<dbReference type="GO" id="GO:0004527">
    <property type="term" value="F:exonuclease activity"/>
    <property type="evidence" value="ECO:0007669"/>
    <property type="project" value="UniProtKB-UniRule"/>
</dbReference>
<dbReference type="GO" id="GO:0008270">
    <property type="term" value="F:zinc ion binding"/>
    <property type="evidence" value="ECO:0007669"/>
    <property type="project" value="UniProtKB-UniRule"/>
</dbReference>
<dbReference type="CDD" id="cd07717">
    <property type="entry name" value="RNaseZ_ZiPD-like_MBL-fold"/>
    <property type="match status" value="1"/>
</dbReference>
<dbReference type="FunFam" id="3.60.15.10:FF:000002">
    <property type="entry name" value="Ribonuclease Z"/>
    <property type="match status" value="1"/>
</dbReference>
<dbReference type="Gene3D" id="3.60.15.10">
    <property type="entry name" value="Ribonuclease Z/Hydroxyacylglutathione hydrolase-like"/>
    <property type="match status" value="1"/>
</dbReference>
<dbReference type="HAMAP" id="MF_01818">
    <property type="entry name" value="RNase_Z_BN"/>
    <property type="match status" value="1"/>
</dbReference>
<dbReference type="InterPro" id="IPR001279">
    <property type="entry name" value="Metallo-B-lactamas"/>
</dbReference>
<dbReference type="InterPro" id="IPR036866">
    <property type="entry name" value="RibonucZ/Hydroxyglut_hydro"/>
</dbReference>
<dbReference type="InterPro" id="IPR013469">
    <property type="entry name" value="Rnase_BN"/>
</dbReference>
<dbReference type="InterPro" id="IPR013471">
    <property type="entry name" value="RNase_Z/BN"/>
</dbReference>
<dbReference type="NCBIfam" id="NF000800">
    <property type="entry name" value="PRK00055.1-1"/>
    <property type="match status" value="1"/>
</dbReference>
<dbReference type="NCBIfam" id="NF000801">
    <property type="entry name" value="PRK00055.1-3"/>
    <property type="match status" value="1"/>
</dbReference>
<dbReference type="NCBIfam" id="TIGR02651">
    <property type="entry name" value="RNase_Z"/>
    <property type="match status" value="1"/>
</dbReference>
<dbReference type="NCBIfam" id="TIGR02649">
    <property type="entry name" value="true_RNase_BN"/>
    <property type="match status" value="1"/>
</dbReference>
<dbReference type="PANTHER" id="PTHR46018">
    <property type="entry name" value="ZINC PHOSPHODIESTERASE ELAC PROTEIN 1"/>
    <property type="match status" value="1"/>
</dbReference>
<dbReference type="PANTHER" id="PTHR46018:SF2">
    <property type="entry name" value="ZINC PHOSPHODIESTERASE ELAC PROTEIN 1"/>
    <property type="match status" value="1"/>
</dbReference>
<dbReference type="Pfam" id="PF12706">
    <property type="entry name" value="Lactamase_B_2"/>
    <property type="match status" value="1"/>
</dbReference>
<dbReference type="SMART" id="SM00849">
    <property type="entry name" value="Lactamase_B"/>
    <property type="match status" value="1"/>
</dbReference>
<dbReference type="SUPFAM" id="SSF56281">
    <property type="entry name" value="Metallo-hydrolase/oxidoreductase"/>
    <property type="match status" value="1"/>
</dbReference>
<reference key="1">
    <citation type="journal article" date="2002" name="Nucleic Acids Res.">
        <title>Genome sequence of Shigella flexneri 2a: insights into pathogenicity through comparison with genomes of Escherichia coli K12 and O157.</title>
        <authorList>
            <person name="Jin Q."/>
            <person name="Yuan Z."/>
            <person name="Xu J."/>
            <person name="Wang Y."/>
            <person name="Shen Y."/>
            <person name="Lu W."/>
            <person name="Wang J."/>
            <person name="Liu H."/>
            <person name="Yang J."/>
            <person name="Yang F."/>
            <person name="Zhang X."/>
            <person name="Zhang J."/>
            <person name="Yang G."/>
            <person name="Wu H."/>
            <person name="Qu D."/>
            <person name="Dong J."/>
            <person name="Sun L."/>
            <person name="Xue Y."/>
            <person name="Zhao A."/>
            <person name="Gao Y."/>
            <person name="Zhu J."/>
            <person name="Kan B."/>
            <person name="Ding K."/>
            <person name="Chen S."/>
            <person name="Cheng H."/>
            <person name="Yao Z."/>
            <person name="He B."/>
            <person name="Chen R."/>
            <person name="Ma D."/>
            <person name="Qiang B."/>
            <person name="Wen Y."/>
            <person name="Hou Y."/>
            <person name="Yu J."/>
        </authorList>
    </citation>
    <scope>NUCLEOTIDE SEQUENCE [LARGE SCALE GENOMIC DNA]</scope>
    <source>
        <strain>301 / Serotype 2a</strain>
    </source>
</reference>
<reference key="2">
    <citation type="journal article" date="2003" name="Infect. Immun.">
        <title>Complete genome sequence and comparative genomics of Shigella flexneri serotype 2a strain 2457T.</title>
        <authorList>
            <person name="Wei J."/>
            <person name="Goldberg M.B."/>
            <person name="Burland V."/>
            <person name="Venkatesan M.M."/>
            <person name="Deng W."/>
            <person name="Fournier G."/>
            <person name="Mayhew G.F."/>
            <person name="Plunkett G. III"/>
            <person name="Rose D.J."/>
            <person name="Darling A."/>
            <person name="Mau B."/>
            <person name="Perna N.T."/>
            <person name="Payne S.M."/>
            <person name="Runyen-Janecky L.J."/>
            <person name="Zhou S."/>
            <person name="Schwartz D.C."/>
            <person name="Blattner F.R."/>
        </authorList>
    </citation>
    <scope>NUCLEOTIDE SEQUENCE [LARGE SCALE GENOMIC DNA]</scope>
    <source>
        <strain>ATCC 700930 / 2457T / Serotype 2a</strain>
    </source>
</reference>
<organism>
    <name type="scientific">Shigella flexneri</name>
    <dbReference type="NCBI Taxonomy" id="623"/>
    <lineage>
        <taxon>Bacteria</taxon>
        <taxon>Pseudomonadati</taxon>
        <taxon>Pseudomonadota</taxon>
        <taxon>Gammaproteobacteria</taxon>
        <taxon>Enterobacterales</taxon>
        <taxon>Enterobacteriaceae</taxon>
        <taxon>Shigella</taxon>
    </lineage>
</organism>
<proteinExistence type="inferred from homology"/>
<sequence>MELIFLGTSAGVPTRTRNVTAILLNLQHPTQSGLWLFDCGEGTQHQLLHTAFNPGKLDKIFISHLHGDHLFGLPGLLCSRSMSGIIQPLTIYGPQGIREFVETALRISGSWTDYPLEIVEIGAGEILDDGLRKVTAYPLEHPLECYGYRIEEHDKPGALNAQALKAAGVPPGPLFQELKAGKTITLEDGRQINGADYLAAPVPGKALAIFGDTGPCDAALDLAKGVDVMVHEATLDITMEAKANSRGHSSTRQAATLAREAGVGKLIITHVSSRYDDKGCQHLLRECRSIFPATELANDFTVFNV</sequence>
<protein>
    <recommendedName>
        <fullName evidence="1">Ribonuclease BN</fullName>
        <shortName evidence="1">RNase BN</shortName>
        <ecNumber evidence="1">3.1.-.-</ecNumber>
    </recommendedName>
    <alternativeName>
        <fullName evidence="1">Ribonuclease Z homolog</fullName>
        <shortName evidence="1">RNase Z homolog</shortName>
    </alternativeName>
</protein>
<accession>P0A8V1</accession>
<accession>P77449</accession>
<accession>Q47012</accession>
<name>RBN_SHIFL</name>
<evidence type="ECO:0000255" key="1">
    <source>
        <dbReference type="HAMAP-Rule" id="MF_01818"/>
    </source>
</evidence>
<evidence type="ECO:0000305" key="2"/>
<keyword id="KW-0255">Endonuclease</keyword>
<keyword id="KW-0269">Exonuclease</keyword>
<keyword id="KW-0378">Hydrolase</keyword>
<keyword id="KW-0479">Metal-binding</keyword>
<keyword id="KW-0540">Nuclease</keyword>
<keyword id="KW-1185">Reference proteome</keyword>
<keyword id="KW-0819">tRNA processing</keyword>
<keyword id="KW-0862">Zinc</keyword>
<comment type="function">
    <text evidence="1">Zinc phosphodiesterase, which has both exoribonuclease and endoribonuclease activities.</text>
</comment>
<comment type="cofactor">
    <cofactor evidence="1">
        <name>Zn(2+)</name>
        <dbReference type="ChEBI" id="CHEBI:29105"/>
    </cofactor>
    <text evidence="1">Binds 2 Zn(2+) ions.</text>
</comment>
<comment type="subunit">
    <text evidence="1">Homodimer.</text>
</comment>
<comment type="similarity">
    <text evidence="1">Belongs to the RNase Z family. RNase BN subfamily.</text>
</comment>
<comment type="sequence caution" evidence="2">
    <conflict type="erroneous initiation">
        <sequence resource="EMBL-CDS" id="AAN43861"/>
    </conflict>
    <text>Extended N-terminus.</text>
</comment>
<comment type="sequence caution" evidence="2">
    <conflict type="erroneous initiation">
        <sequence resource="EMBL-CDS" id="AAP17680"/>
    </conflict>
    <text>Extended N-terminus.</text>
</comment>
<feature type="chain" id="PRO_0000155892" description="Ribonuclease BN">
    <location>
        <begin position="1"/>
        <end position="305"/>
    </location>
</feature>
<feature type="active site" description="Proton acceptor" evidence="1">
    <location>
        <position position="68"/>
    </location>
</feature>
<feature type="binding site" evidence="1">
    <location>
        <position position="64"/>
    </location>
    <ligand>
        <name>Zn(2+)</name>
        <dbReference type="ChEBI" id="CHEBI:29105"/>
        <label>1</label>
        <note>catalytic</note>
    </ligand>
</feature>
<feature type="binding site" evidence="1">
    <location>
        <position position="66"/>
    </location>
    <ligand>
        <name>Zn(2+)</name>
        <dbReference type="ChEBI" id="CHEBI:29105"/>
        <label>1</label>
        <note>catalytic</note>
    </ligand>
</feature>
<feature type="binding site" evidence="1">
    <location>
        <position position="68"/>
    </location>
    <ligand>
        <name>Zn(2+)</name>
        <dbReference type="ChEBI" id="CHEBI:29105"/>
        <label>2</label>
        <note>catalytic</note>
    </ligand>
</feature>
<feature type="binding site" evidence="1">
    <location>
        <position position="69"/>
    </location>
    <ligand>
        <name>Zn(2+)</name>
        <dbReference type="ChEBI" id="CHEBI:29105"/>
        <label>2</label>
        <note>catalytic</note>
    </ligand>
</feature>
<feature type="binding site" evidence="1">
    <location>
        <position position="141"/>
    </location>
    <ligand>
        <name>Zn(2+)</name>
        <dbReference type="ChEBI" id="CHEBI:29105"/>
        <label>1</label>
        <note>catalytic</note>
    </ligand>
</feature>
<feature type="binding site" evidence="1">
    <location>
        <position position="212"/>
    </location>
    <ligand>
        <name>Zn(2+)</name>
        <dbReference type="ChEBI" id="CHEBI:29105"/>
        <label>1</label>
        <note>catalytic</note>
    </ligand>
</feature>
<feature type="binding site" evidence="1">
    <location>
        <position position="212"/>
    </location>
    <ligand>
        <name>Zn(2+)</name>
        <dbReference type="ChEBI" id="CHEBI:29105"/>
        <label>2</label>
        <note>catalytic</note>
    </ligand>
</feature>
<feature type="binding site" evidence="1">
    <location>
        <position position="270"/>
    </location>
    <ligand>
        <name>Zn(2+)</name>
        <dbReference type="ChEBI" id="CHEBI:29105"/>
        <label>2</label>
        <note>catalytic</note>
    </ligand>
</feature>